<feature type="chain" id="PRO_1000000948" description="Adenylosuccinate synthetase">
    <location>
        <begin position="1"/>
        <end position="432"/>
    </location>
</feature>
<feature type="active site" description="Proton acceptor" evidence="1">
    <location>
        <position position="14"/>
    </location>
</feature>
<feature type="active site" description="Proton donor" evidence="1">
    <location>
        <position position="42"/>
    </location>
</feature>
<feature type="binding site" evidence="1">
    <location>
        <begin position="13"/>
        <end position="19"/>
    </location>
    <ligand>
        <name>GTP</name>
        <dbReference type="ChEBI" id="CHEBI:37565"/>
    </ligand>
</feature>
<feature type="binding site" description="in other chain" evidence="1">
    <location>
        <begin position="14"/>
        <end position="17"/>
    </location>
    <ligand>
        <name>IMP</name>
        <dbReference type="ChEBI" id="CHEBI:58053"/>
        <note>ligand shared between dimeric partners</note>
    </ligand>
</feature>
<feature type="binding site" evidence="1">
    <location>
        <position position="14"/>
    </location>
    <ligand>
        <name>Mg(2+)</name>
        <dbReference type="ChEBI" id="CHEBI:18420"/>
    </ligand>
</feature>
<feature type="binding site" description="in other chain" evidence="1">
    <location>
        <begin position="39"/>
        <end position="42"/>
    </location>
    <ligand>
        <name>IMP</name>
        <dbReference type="ChEBI" id="CHEBI:58053"/>
        <note>ligand shared between dimeric partners</note>
    </ligand>
</feature>
<feature type="binding site" evidence="1">
    <location>
        <begin position="41"/>
        <end position="43"/>
    </location>
    <ligand>
        <name>GTP</name>
        <dbReference type="ChEBI" id="CHEBI:37565"/>
    </ligand>
</feature>
<feature type="binding site" evidence="1">
    <location>
        <position position="41"/>
    </location>
    <ligand>
        <name>Mg(2+)</name>
        <dbReference type="ChEBI" id="CHEBI:18420"/>
    </ligand>
</feature>
<feature type="binding site" description="in other chain" evidence="1">
    <location>
        <position position="130"/>
    </location>
    <ligand>
        <name>IMP</name>
        <dbReference type="ChEBI" id="CHEBI:58053"/>
        <note>ligand shared between dimeric partners</note>
    </ligand>
</feature>
<feature type="binding site" evidence="1">
    <location>
        <position position="144"/>
    </location>
    <ligand>
        <name>IMP</name>
        <dbReference type="ChEBI" id="CHEBI:58053"/>
        <note>ligand shared between dimeric partners</note>
    </ligand>
</feature>
<feature type="binding site" description="in other chain" evidence="1">
    <location>
        <position position="225"/>
    </location>
    <ligand>
        <name>IMP</name>
        <dbReference type="ChEBI" id="CHEBI:58053"/>
        <note>ligand shared between dimeric partners</note>
    </ligand>
</feature>
<feature type="binding site" description="in other chain" evidence="1">
    <location>
        <position position="240"/>
    </location>
    <ligand>
        <name>IMP</name>
        <dbReference type="ChEBI" id="CHEBI:58053"/>
        <note>ligand shared between dimeric partners</note>
    </ligand>
</feature>
<feature type="binding site" evidence="1">
    <location>
        <begin position="300"/>
        <end position="306"/>
    </location>
    <ligand>
        <name>substrate</name>
    </ligand>
</feature>
<feature type="binding site" description="in other chain" evidence="1">
    <location>
        <position position="304"/>
    </location>
    <ligand>
        <name>IMP</name>
        <dbReference type="ChEBI" id="CHEBI:58053"/>
        <note>ligand shared between dimeric partners</note>
    </ligand>
</feature>
<feature type="binding site" evidence="1">
    <location>
        <position position="306"/>
    </location>
    <ligand>
        <name>GTP</name>
        <dbReference type="ChEBI" id="CHEBI:37565"/>
    </ligand>
</feature>
<feature type="binding site" evidence="1">
    <location>
        <begin position="332"/>
        <end position="334"/>
    </location>
    <ligand>
        <name>GTP</name>
        <dbReference type="ChEBI" id="CHEBI:37565"/>
    </ligand>
</feature>
<feature type="binding site" evidence="1">
    <location>
        <begin position="415"/>
        <end position="417"/>
    </location>
    <ligand>
        <name>GTP</name>
        <dbReference type="ChEBI" id="CHEBI:37565"/>
    </ligand>
</feature>
<dbReference type="EC" id="6.3.4.4" evidence="1"/>
<dbReference type="EMBL" id="CP000305">
    <property type="protein sequence ID" value="ABG19620.1"/>
    <property type="molecule type" value="Genomic_DNA"/>
</dbReference>
<dbReference type="EMBL" id="ACNQ01000017">
    <property type="protein sequence ID" value="EEO75806.1"/>
    <property type="molecule type" value="Genomic_DNA"/>
</dbReference>
<dbReference type="RefSeq" id="WP_002209157.1">
    <property type="nucleotide sequence ID" value="NZ_ACNQ01000017.1"/>
</dbReference>
<dbReference type="SMR" id="Q1CEG0"/>
<dbReference type="KEGG" id="ypn:YPN_3293"/>
<dbReference type="HOGENOM" id="CLU_029848_0_0_6"/>
<dbReference type="UniPathway" id="UPA00075">
    <property type="reaction ID" value="UER00335"/>
</dbReference>
<dbReference type="Proteomes" id="UP000008936">
    <property type="component" value="Chromosome"/>
</dbReference>
<dbReference type="GO" id="GO:0005737">
    <property type="term" value="C:cytoplasm"/>
    <property type="evidence" value="ECO:0007669"/>
    <property type="project" value="UniProtKB-SubCell"/>
</dbReference>
<dbReference type="GO" id="GO:0004019">
    <property type="term" value="F:adenylosuccinate synthase activity"/>
    <property type="evidence" value="ECO:0007669"/>
    <property type="project" value="UniProtKB-UniRule"/>
</dbReference>
<dbReference type="GO" id="GO:0005525">
    <property type="term" value="F:GTP binding"/>
    <property type="evidence" value="ECO:0007669"/>
    <property type="project" value="UniProtKB-UniRule"/>
</dbReference>
<dbReference type="GO" id="GO:0000287">
    <property type="term" value="F:magnesium ion binding"/>
    <property type="evidence" value="ECO:0007669"/>
    <property type="project" value="UniProtKB-UniRule"/>
</dbReference>
<dbReference type="GO" id="GO:0044208">
    <property type="term" value="P:'de novo' AMP biosynthetic process"/>
    <property type="evidence" value="ECO:0007669"/>
    <property type="project" value="UniProtKB-UniRule"/>
</dbReference>
<dbReference type="GO" id="GO:0046040">
    <property type="term" value="P:IMP metabolic process"/>
    <property type="evidence" value="ECO:0007669"/>
    <property type="project" value="TreeGrafter"/>
</dbReference>
<dbReference type="CDD" id="cd03108">
    <property type="entry name" value="AdSS"/>
    <property type="match status" value="1"/>
</dbReference>
<dbReference type="FunFam" id="1.10.300.10:FF:000001">
    <property type="entry name" value="Adenylosuccinate synthetase"/>
    <property type="match status" value="1"/>
</dbReference>
<dbReference type="FunFam" id="3.90.170.10:FF:000001">
    <property type="entry name" value="Adenylosuccinate synthetase"/>
    <property type="match status" value="1"/>
</dbReference>
<dbReference type="Gene3D" id="3.40.440.10">
    <property type="entry name" value="Adenylosuccinate Synthetase, subunit A, domain 1"/>
    <property type="match status" value="1"/>
</dbReference>
<dbReference type="Gene3D" id="1.10.300.10">
    <property type="entry name" value="Adenylosuccinate Synthetase, subunit A, domain 2"/>
    <property type="match status" value="1"/>
</dbReference>
<dbReference type="Gene3D" id="3.90.170.10">
    <property type="entry name" value="Adenylosuccinate Synthetase, subunit A, domain 3"/>
    <property type="match status" value="1"/>
</dbReference>
<dbReference type="HAMAP" id="MF_00011">
    <property type="entry name" value="Adenylosucc_synth"/>
    <property type="match status" value="1"/>
</dbReference>
<dbReference type="InterPro" id="IPR018220">
    <property type="entry name" value="Adenylosuccin_syn_GTP-bd"/>
</dbReference>
<dbReference type="InterPro" id="IPR033128">
    <property type="entry name" value="Adenylosuccin_syn_Lys_AS"/>
</dbReference>
<dbReference type="InterPro" id="IPR042109">
    <property type="entry name" value="Adenylosuccinate_synth_dom1"/>
</dbReference>
<dbReference type="InterPro" id="IPR042110">
    <property type="entry name" value="Adenylosuccinate_synth_dom2"/>
</dbReference>
<dbReference type="InterPro" id="IPR042111">
    <property type="entry name" value="Adenylosuccinate_synth_dom3"/>
</dbReference>
<dbReference type="InterPro" id="IPR001114">
    <property type="entry name" value="Adenylosuccinate_synthetase"/>
</dbReference>
<dbReference type="InterPro" id="IPR027417">
    <property type="entry name" value="P-loop_NTPase"/>
</dbReference>
<dbReference type="NCBIfam" id="NF002223">
    <property type="entry name" value="PRK01117.1"/>
    <property type="match status" value="1"/>
</dbReference>
<dbReference type="NCBIfam" id="TIGR00184">
    <property type="entry name" value="purA"/>
    <property type="match status" value="1"/>
</dbReference>
<dbReference type="PANTHER" id="PTHR11846">
    <property type="entry name" value="ADENYLOSUCCINATE SYNTHETASE"/>
    <property type="match status" value="1"/>
</dbReference>
<dbReference type="PANTHER" id="PTHR11846:SF0">
    <property type="entry name" value="ADENYLOSUCCINATE SYNTHETASE"/>
    <property type="match status" value="1"/>
</dbReference>
<dbReference type="Pfam" id="PF00709">
    <property type="entry name" value="Adenylsucc_synt"/>
    <property type="match status" value="1"/>
</dbReference>
<dbReference type="SMART" id="SM00788">
    <property type="entry name" value="Adenylsucc_synt"/>
    <property type="match status" value="1"/>
</dbReference>
<dbReference type="SUPFAM" id="SSF52540">
    <property type="entry name" value="P-loop containing nucleoside triphosphate hydrolases"/>
    <property type="match status" value="1"/>
</dbReference>
<dbReference type="PROSITE" id="PS01266">
    <property type="entry name" value="ADENYLOSUCCIN_SYN_1"/>
    <property type="match status" value="1"/>
</dbReference>
<dbReference type="PROSITE" id="PS00513">
    <property type="entry name" value="ADENYLOSUCCIN_SYN_2"/>
    <property type="match status" value="1"/>
</dbReference>
<protein>
    <recommendedName>
        <fullName evidence="1">Adenylosuccinate synthetase</fullName>
        <shortName evidence="1">AMPSase</shortName>
        <shortName evidence="1">AdSS</shortName>
        <ecNumber evidence="1">6.3.4.4</ecNumber>
    </recommendedName>
    <alternativeName>
        <fullName evidence="1">IMP--aspartate ligase</fullName>
    </alternativeName>
</protein>
<accession>Q1CEG0</accession>
<accession>C4GY06</accession>
<sequence length="432" mass="47278">MGKNVVVLGTQWGDEGKGKVVDLLTERAKYVVRYQGGHNAGHTLVINGEKTVLHLIPSGILRENVISIIGNGVVLAPDALMKEMTELEARGVPVRERLLLSEACPLILPYHVALDNAREKARGAKAIGTTGRGIGPAYEDKVARRGLRVSDLFNKETFAIKLKEIVEYHNFQLVHYYKEAAVDYQKVLDDVLAIADILTAMVVDVSELLDNARKQGELIMFEGAQGTLLDIDHGTYPYVTSSNTTAGGVATGSGLGPRYVDYVLGIVKAYSTRVGAGPFPTELNDETGEFLRKQGNEYGATTGRSRRTGWLDIVAVRRAVQINSLSGFCMTKLDVLDGLKEVKLCVGYRMPDGREVDTTPLAAEGWEGIEPIYETMPGWSETTFGVKEHSKLPQAALNYIQRVEELTGVPIDIISTGPDRDETMILRDPFDA</sequence>
<evidence type="ECO:0000255" key="1">
    <source>
        <dbReference type="HAMAP-Rule" id="MF_00011"/>
    </source>
</evidence>
<keyword id="KW-0963">Cytoplasm</keyword>
<keyword id="KW-0342">GTP-binding</keyword>
<keyword id="KW-0436">Ligase</keyword>
<keyword id="KW-0460">Magnesium</keyword>
<keyword id="KW-0479">Metal-binding</keyword>
<keyword id="KW-0547">Nucleotide-binding</keyword>
<keyword id="KW-0658">Purine biosynthesis</keyword>
<comment type="function">
    <text evidence="1">Plays an important role in the de novo pathway of purine nucleotide biosynthesis. Catalyzes the first committed step in the biosynthesis of AMP from IMP.</text>
</comment>
<comment type="catalytic activity">
    <reaction evidence="1">
        <text>IMP + L-aspartate + GTP = N(6)-(1,2-dicarboxyethyl)-AMP + GDP + phosphate + 2 H(+)</text>
        <dbReference type="Rhea" id="RHEA:15753"/>
        <dbReference type="ChEBI" id="CHEBI:15378"/>
        <dbReference type="ChEBI" id="CHEBI:29991"/>
        <dbReference type="ChEBI" id="CHEBI:37565"/>
        <dbReference type="ChEBI" id="CHEBI:43474"/>
        <dbReference type="ChEBI" id="CHEBI:57567"/>
        <dbReference type="ChEBI" id="CHEBI:58053"/>
        <dbReference type="ChEBI" id="CHEBI:58189"/>
        <dbReference type="EC" id="6.3.4.4"/>
    </reaction>
</comment>
<comment type="cofactor">
    <cofactor evidence="1">
        <name>Mg(2+)</name>
        <dbReference type="ChEBI" id="CHEBI:18420"/>
    </cofactor>
    <text evidence="1">Binds 1 Mg(2+) ion per subunit.</text>
</comment>
<comment type="pathway">
    <text evidence="1">Purine metabolism; AMP biosynthesis via de novo pathway; AMP from IMP: step 1/2.</text>
</comment>
<comment type="subunit">
    <text evidence="1">Homodimer.</text>
</comment>
<comment type="subcellular location">
    <subcellularLocation>
        <location evidence="1">Cytoplasm</location>
    </subcellularLocation>
</comment>
<comment type="similarity">
    <text evidence="1">Belongs to the adenylosuccinate synthetase family.</text>
</comment>
<reference key="1">
    <citation type="journal article" date="2006" name="J. Bacteriol.">
        <title>Complete genome sequence of Yersinia pestis strains Antiqua and Nepal516: evidence of gene reduction in an emerging pathogen.</title>
        <authorList>
            <person name="Chain P.S.G."/>
            <person name="Hu P."/>
            <person name="Malfatti S.A."/>
            <person name="Radnedge L."/>
            <person name="Larimer F."/>
            <person name="Vergez L.M."/>
            <person name="Worsham P."/>
            <person name="Chu M.C."/>
            <person name="Andersen G.L."/>
        </authorList>
    </citation>
    <scope>NUCLEOTIDE SEQUENCE [LARGE SCALE GENOMIC DNA]</scope>
    <source>
        <strain>Nepal516</strain>
    </source>
</reference>
<reference key="2">
    <citation type="submission" date="2009-04" db="EMBL/GenBank/DDBJ databases">
        <title>Yersinia pestis Nepal516A whole genome shotgun sequencing project.</title>
        <authorList>
            <person name="Plunkett G. III"/>
            <person name="Anderson B.D."/>
            <person name="Baumler D.J."/>
            <person name="Burland V."/>
            <person name="Cabot E.L."/>
            <person name="Glasner J.D."/>
            <person name="Mau B."/>
            <person name="Neeno-Eckwall E."/>
            <person name="Perna N.T."/>
            <person name="Munk A.C."/>
            <person name="Tapia R."/>
            <person name="Green L.D."/>
            <person name="Rogers Y.C."/>
            <person name="Detter J.C."/>
            <person name="Bruce D.C."/>
            <person name="Brettin T.S."/>
        </authorList>
    </citation>
    <scope>NUCLEOTIDE SEQUENCE [LARGE SCALE GENOMIC DNA]</scope>
    <source>
        <strain>Nepal516</strain>
    </source>
</reference>
<gene>
    <name evidence="1" type="primary">purA</name>
    <name type="ordered locus">YPN_3293</name>
    <name type="ORF">YP516_3742</name>
</gene>
<name>PURA_YERPN</name>
<proteinExistence type="inferred from homology"/>
<organism>
    <name type="scientific">Yersinia pestis bv. Antiqua (strain Nepal516)</name>
    <dbReference type="NCBI Taxonomy" id="377628"/>
    <lineage>
        <taxon>Bacteria</taxon>
        <taxon>Pseudomonadati</taxon>
        <taxon>Pseudomonadota</taxon>
        <taxon>Gammaproteobacteria</taxon>
        <taxon>Enterobacterales</taxon>
        <taxon>Yersiniaceae</taxon>
        <taxon>Yersinia</taxon>
    </lineage>
</organism>